<evidence type="ECO:0000255" key="1">
    <source>
        <dbReference type="HAMAP-Rule" id="MF_00195"/>
    </source>
</evidence>
<organism>
    <name type="scientific">Herminiimonas arsenicoxydans</name>
    <dbReference type="NCBI Taxonomy" id="204773"/>
    <lineage>
        <taxon>Bacteria</taxon>
        <taxon>Pseudomonadati</taxon>
        <taxon>Pseudomonadota</taxon>
        <taxon>Betaproteobacteria</taxon>
        <taxon>Burkholderiales</taxon>
        <taxon>Oxalobacteraceae</taxon>
        <taxon>Herminiimonas</taxon>
    </lineage>
</organism>
<feature type="chain" id="PRO_1000011638" description="GTPase Der">
    <location>
        <begin position="1"/>
        <end position="447"/>
    </location>
</feature>
<feature type="domain" description="EngA-type G 1">
    <location>
        <begin position="3"/>
        <end position="167"/>
    </location>
</feature>
<feature type="domain" description="EngA-type G 2">
    <location>
        <begin position="181"/>
        <end position="354"/>
    </location>
</feature>
<feature type="domain" description="KH-like" evidence="1">
    <location>
        <begin position="355"/>
        <end position="439"/>
    </location>
</feature>
<feature type="binding site" evidence="1">
    <location>
        <begin position="9"/>
        <end position="16"/>
    </location>
    <ligand>
        <name>GTP</name>
        <dbReference type="ChEBI" id="CHEBI:37565"/>
        <label>1</label>
    </ligand>
</feature>
<feature type="binding site" evidence="1">
    <location>
        <begin position="56"/>
        <end position="60"/>
    </location>
    <ligand>
        <name>GTP</name>
        <dbReference type="ChEBI" id="CHEBI:37565"/>
        <label>1</label>
    </ligand>
</feature>
<feature type="binding site" evidence="1">
    <location>
        <begin position="119"/>
        <end position="122"/>
    </location>
    <ligand>
        <name>GTP</name>
        <dbReference type="ChEBI" id="CHEBI:37565"/>
        <label>1</label>
    </ligand>
</feature>
<feature type="binding site" evidence="1">
    <location>
        <begin position="187"/>
        <end position="194"/>
    </location>
    <ligand>
        <name>GTP</name>
        <dbReference type="ChEBI" id="CHEBI:37565"/>
        <label>2</label>
    </ligand>
</feature>
<feature type="binding site" evidence="1">
    <location>
        <begin position="234"/>
        <end position="238"/>
    </location>
    <ligand>
        <name>GTP</name>
        <dbReference type="ChEBI" id="CHEBI:37565"/>
        <label>2</label>
    </ligand>
</feature>
<feature type="binding site" evidence="1">
    <location>
        <begin position="299"/>
        <end position="302"/>
    </location>
    <ligand>
        <name>GTP</name>
        <dbReference type="ChEBI" id="CHEBI:37565"/>
        <label>2</label>
    </ligand>
</feature>
<name>DER_HERAR</name>
<comment type="function">
    <text evidence="1">GTPase that plays an essential role in the late steps of ribosome biogenesis.</text>
</comment>
<comment type="subunit">
    <text evidence="1">Associates with the 50S ribosomal subunit.</text>
</comment>
<comment type="similarity">
    <text evidence="1">Belongs to the TRAFAC class TrmE-Era-EngA-EngB-Septin-like GTPase superfamily. EngA (Der) GTPase family.</text>
</comment>
<keyword id="KW-0342">GTP-binding</keyword>
<keyword id="KW-0547">Nucleotide-binding</keyword>
<keyword id="KW-1185">Reference proteome</keyword>
<keyword id="KW-0677">Repeat</keyword>
<keyword id="KW-0690">Ribosome biogenesis</keyword>
<accession>A4G4K6</accession>
<reference key="1">
    <citation type="journal article" date="2007" name="PLoS Genet.">
        <title>A tale of two oxidation states: bacterial colonization of arsenic-rich environments.</title>
        <authorList>
            <person name="Muller D."/>
            <person name="Medigue C."/>
            <person name="Koechler S."/>
            <person name="Barbe V."/>
            <person name="Barakat M."/>
            <person name="Talla E."/>
            <person name="Bonnefoy V."/>
            <person name="Krin E."/>
            <person name="Arsene-Ploetze F."/>
            <person name="Carapito C."/>
            <person name="Chandler M."/>
            <person name="Cournoyer B."/>
            <person name="Cruveiller S."/>
            <person name="Dossat C."/>
            <person name="Duval S."/>
            <person name="Heymann M."/>
            <person name="Leize E."/>
            <person name="Lieutaud A."/>
            <person name="Lievremont D."/>
            <person name="Makita Y."/>
            <person name="Mangenot S."/>
            <person name="Nitschke W."/>
            <person name="Ortet P."/>
            <person name="Perdrial N."/>
            <person name="Schoepp B."/>
            <person name="Siguier P."/>
            <person name="Simeonova D.D."/>
            <person name="Rouy Z."/>
            <person name="Segurens B."/>
            <person name="Turlin E."/>
            <person name="Vallenet D."/>
            <person name="van Dorsselaer A."/>
            <person name="Weiss S."/>
            <person name="Weissenbach J."/>
            <person name="Lett M.-C."/>
            <person name="Danchin A."/>
            <person name="Bertin P.N."/>
        </authorList>
    </citation>
    <scope>NUCLEOTIDE SEQUENCE [LARGE SCALE GENOMIC DNA]</scope>
    <source>
        <strain>ULPAs1</strain>
    </source>
</reference>
<gene>
    <name evidence="1" type="primary">der</name>
    <name type="synonym">engA</name>
    <name type="ordered locus">HEAR1268</name>
</gene>
<protein>
    <recommendedName>
        <fullName evidence="1">GTPase Der</fullName>
    </recommendedName>
    <alternativeName>
        <fullName evidence="1">GTP-binding protein EngA</fullName>
    </alternativeName>
</protein>
<proteinExistence type="inferred from homology"/>
<dbReference type="EMBL" id="CU207211">
    <property type="protein sequence ID" value="CAL61443.1"/>
    <property type="molecule type" value="Genomic_DNA"/>
</dbReference>
<dbReference type="SMR" id="A4G4K6"/>
<dbReference type="STRING" id="204773.HEAR1268"/>
<dbReference type="KEGG" id="har:HEAR1268"/>
<dbReference type="eggNOG" id="COG1160">
    <property type="taxonomic scope" value="Bacteria"/>
</dbReference>
<dbReference type="HOGENOM" id="CLU_016077_6_2_4"/>
<dbReference type="OrthoDB" id="9805918at2"/>
<dbReference type="Proteomes" id="UP000006697">
    <property type="component" value="Chromosome"/>
</dbReference>
<dbReference type="GO" id="GO:0016887">
    <property type="term" value="F:ATP hydrolysis activity"/>
    <property type="evidence" value="ECO:0007669"/>
    <property type="project" value="InterPro"/>
</dbReference>
<dbReference type="GO" id="GO:0005525">
    <property type="term" value="F:GTP binding"/>
    <property type="evidence" value="ECO:0007669"/>
    <property type="project" value="UniProtKB-UniRule"/>
</dbReference>
<dbReference type="GO" id="GO:0043022">
    <property type="term" value="F:ribosome binding"/>
    <property type="evidence" value="ECO:0007669"/>
    <property type="project" value="TreeGrafter"/>
</dbReference>
<dbReference type="GO" id="GO:0042254">
    <property type="term" value="P:ribosome biogenesis"/>
    <property type="evidence" value="ECO:0007669"/>
    <property type="project" value="UniProtKB-KW"/>
</dbReference>
<dbReference type="CDD" id="cd01894">
    <property type="entry name" value="EngA1"/>
    <property type="match status" value="1"/>
</dbReference>
<dbReference type="CDD" id="cd01895">
    <property type="entry name" value="EngA2"/>
    <property type="match status" value="1"/>
</dbReference>
<dbReference type="FunFam" id="3.30.300.20:FF:000004">
    <property type="entry name" value="GTPase Der"/>
    <property type="match status" value="1"/>
</dbReference>
<dbReference type="FunFam" id="3.40.50.300:FF:000040">
    <property type="entry name" value="GTPase Der"/>
    <property type="match status" value="1"/>
</dbReference>
<dbReference type="FunFam" id="3.40.50.300:FF:000057">
    <property type="entry name" value="GTPase Der"/>
    <property type="match status" value="1"/>
</dbReference>
<dbReference type="Gene3D" id="3.30.300.20">
    <property type="match status" value="1"/>
</dbReference>
<dbReference type="Gene3D" id="3.40.50.300">
    <property type="entry name" value="P-loop containing nucleotide triphosphate hydrolases"/>
    <property type="match status" value="2"/>
</dbReference>
<dbReference type="HAMAP" id="MF_00195">
    <property type="entry name" value="GTPase_Der"/>
    <property type="match status" value="1"/>
</dbReference>
<dbReference type="InterPro" id="IPR003593">
    <property type="entry name" value="AAA+_ATPase"/>
</dbReference>
<dbReference type="InterPro" id="IPR031166">
    <property type="entry name" value="G_ENGA"/>
</dbReference>
<dbReference type="InterPro" id="IPR006073">
    <property type="entry name" value="GTP-bd"/>
</dbReference>
<dbReference type="InterPro" id="IPR016484">
    <property type="entry name" value="GTPase_Der"/>
</dbReference>
<dbReference type="InterPro" id="IPR032859">
    <property type="entry name" value="KH_dom-like"/>
</dbReference>
<dbReference type="InterPro" id="IPR015946">
    <property type="entry name" value="KH_dom-like_a/b"/>
</dbReference>
<dbReference type="InterPro" id="IPR027417">
    <property type="entry name" value="P-loop_NTPase"/>
</dbReference>
<dbReference type="InterPro" id="IPR005225">
    <property type="entry name" value="Small_GTP-bd"/>
</dbReference>
<dbReference type="NCBIfam" id="TIGR03594">
    <property type="entry name" value="GTPase_EngA"/>
    <property type="match status" value="1"/>
</dbReference>
<dbReference type="NCBIfam" id="TIGR00231">
    <property type="entry name" value="small_GTP"/>
    <property type="match status" value="2"/>
</dbReference>
<dbReference type="PANTHER" id="PTHR43834">
    <property type="entry name" value="GTPASE DER"/>
    <property type="match status" value="1"/>
</dbReference>
<dbReference type="PANTHER" id="PTHR43834:SF6">
    <property type="entry name" value="GTPASE DER"/>
    <property type="match status" value="1"/>
</dbReference>
<dbReference type="Pfam" id="PF14714">
    <property type="entry name" value="KH_dom-like"/>
    <property type="match status" value="1"/>
</dbReference>
<dbReference type="Pfam" id="PF01926">
    <property type="entry name" value="MMR_HSR1"/>
    <property type="match status" value="2"/>
</dbReference>
<dbReference type="PIRSF" id="PIRSF006485">
    <property type="entry name" value="GTP-binding_EngA"/>
    <property type="match status" value="1"/>
</dbReference>
<dbReference type="PRINTS" id="PR00326">
    <property type="entry name" value="GTP1OBG"/>
</dbReference>
<dbReference type="SMART" id="SM00382">
    <property type="entry name" value="AAA"/>
    <property type="match status" value="2"/>
</dbReference>
<dbReference type="SUPFAM" id="SSF52540">
    <property type="entry name" value="P-loop containing nucleoside triphosphate hydrolases"/>
    <property type="match status" value="2"/>
</dbReference>
<dbReference type="PROSITE" id="PS51712">
    <property type="entry name" value="G_ENGA"/>
    <property type="match status" value="2"/>
</dbReference>
<sequence>MKPVIALVGRPNVGKSTLFNRLTRSRDALVADLPGLTRDRHYGEGRMGERPFLVIDTGGFEPVAKEGIMHEMAKQTKQAVAEADVVIFIVDGRQGLTPHDKTITDFLRKSGRSVMLVVNKAEGMKYTMVTADFYELGLGDPYVISAAHGDGVSDLVEESLDIAFAQRPPEEEVPESKDRSIRLAIVGRPNVGKSTLVNTLLGEERVIAFDLPGTTRDSIEIPFEREGKLYTLIDTAGIRRRGKVFEAIEKFSVVKTLQSISEANVVLLLLDAQQDISEQDAHIAGFILESGRALVVGVNKWDGLTSDRRDEIKIDLERKLGFLSFAKTHFVSALKSSGIGPMMKSVDNAYAAAMSNLSTPKLTRALIEAVEHQQPRRKGSIRPKLRYAHQGGMNPPIVVIHGNALDAIDANYKRFLEKHFRETFSLVGTPLRIELRSGKNPFSRSEK</sequence>